<reference key="1">
    <citation type="journal article" date="2001" name="J. Bacteriol.">
        <title>Genome of the bacterium Streptococcus pneumoniae strain R6.</title>
        <authorList>
            <person name="Hoskins J."/>
            <person name="Alborn W.E. Jr."/>
            <person name="Arnold J."/>
            <person name="Blaszczak L.C."/>
            <person name="Burgett S."/>
            <person name="DeHoff B.S."/>
            <person name="Estrem S.T."/>
            <person name="Fritz L."/>
            <person name="Fu D.-J."/>
            <person name="Fuller W."/>
            <person name="Geringer C."/>
            <person name="Gilmour R."/>
            <person name="Glass J.S."/>
            <person name="Khoja H."/>
            <person name="Kraft A.R."/>
            <person name="Lagace R.E."/>
            <person name="LeBlanc D.J."/>
            <person name="Lee L.N."/>
            <person name="Lefkowitz E.J."/>
            <person name="Lu J."/>
            <person name="Matsushima P."/>
            <person name="McAhren S.M."/>
            <person name="McHenney M."/>
            <person name="McLeaster K."/>
            <person name="Mundy C.W."/>
            <person name="Nicas T.I."/>
            <person name="Norris F.H."/>
            <person name="O'Gara M."/>
            <person name="Peery R.B."/>
            <person name="Robertson G.T."/>
            <person name="Rockey P."/>
            <person name="Sun P.-M."/>
            <person name="Winkler M.E."/>
            <person name="Yang Y."/>
            <person name="Young-Bellido M."/>
            <person name="Zhao G."/>
            <person name="Zook C.A."/>
            <person name="Baltz R.H."/>
            <person name="Jaskunas S.R."/>
            <person name="Rosteck P.R. Jr."/>
            <person name="Skatrud P.L."/>
            <person name="Glass J.I."/>
        </authorList>
    </citation>
    <scope>NUCLEOTIDE SEQUENCE [LARGE SCALE GENOMIC DNA]</scope>
    <source>
        <strain>ATCC BAA-255 / R6</strain>
    </source>
</reference>
<reference key="2">
    <citation type="journal article" date="1994" name="Mol. Microbiol.">
        <title>Molecular basis of the optochin-sensitive phenotype of pneumococcus: characterization of the genes encoding the F0 complex of the Streptococcus pneumoniae and Streptococcus oralis H(+)-ATPases.</title>
        <authorList>
            <person name="Fenoll A."/>
            <person name="Munoz R."/>
            <person name="Garcia E."/>
            <person name="de la Campa A.G."/>
        </authorList>
    </citation>
    <scope>NUCLEOTIDE SEQUENCE [GENOMIC DNA] OF 1-34</scope>
</reference>
<reference key="3">
    <citation type="journal article" date="2001" name="Mol. Microbiol.">
        <title>The promoter of the operon encoding the F0F1 ATPase of Streptococcus pneumoniae is inducible by pH.</title>
        <authorList>
            <person name="Martin-Galiano A.J."/>
            <person name="Ferrandiz M.J."/>
            <person name="de la Campa A.G."/>
        </authorList>
    </citation>
    <scope>SUBUNIT</scope>
    <scope>SUBCELLULAR LOCATION</scope>
    <scope>INDUCTION</scope>
</reference>
<evidence type="ECO:0000255" key="1">
    <source>
        <dbReference type="HAMAP-Rule" id="MF_01398"/>
    </source>
</evidence>
<evidence type="ECO:0000269" key="2">
    <source>
    </source>
</evidence>
<evidence type="ECO:0000305" key="3">
    <source>
    </source>
</evidence>
<proteinExistence type="evidence at protein level"/>
<dbReference type="EMBL" id="AE007317">
    <property type="protein sequence ID" value="AAL00168.1"/>
    <property type="molecule type" value="Genomic_DNA"/>
</dbReference>
<dbReference type="EMBL" id="Z26851">
    <property type="protein sequence ID" value="CAA81454.1"/>
    <property type="molecule type" value="Genomic_DNA"/>
</dbReference>
<dbReference type="PIR" id="C98042">
    <property type="entry name" value="C98042"/>
</dbReference>
<dbReference type="RefSeq" id="NP_358957.1">
    <property type="nucleotide sequence ID" value="NC_003098.1"/>
</dbReference>
<dbReference type="RefSeq" id="WP_000558554.1">
    <property type="nucleotide sequence ID" value="NC_003098.1"/>
</dbReference>
<dbReference type="SMR" id="P0A2Z3"/>
<dbReference type="STRING" id="171101.spr1364"/>
<dbReference type="GeneID" id="45653249"/>
<dbReference type="KEGG" id="spr:spr1364"/>
<dbReference type="PATRIC" id="fig|171101.6.peg.1478"/>
<dbReference type="eggNOG" id="COG0711">
    <property type="taxonomic scope" value="Bacteria"/>
</dbReference>
<dbReference type="HOGENOM" id="CLU_079215_4_2_9"/>
<dbReference type="Proteomes" id="UP000000586">
    <property type="component" value="Chromosome"/>
</dbReference>
<dbReference type="GO" id="GO:0005886">
    <property type="term" value="C:plasma membrane"/>
    <property type="evidence" value="ECO:0007669"/>
    <property type="project" value="UniProtKB-SubCell"/>
</dbReference>
<dbReference type="GO" id="GO:0045259">
    <property type="term" value="C:proton-transporting ATP synthase complex"/>
    <property type="evidence" value="ECO:0007669"/>
    <property type="project" value="UniProtKB-KW"/>
</dbReference>
<dbReference type="GO" id="GO:0046933">
    <property type="term" value="F:proton-transporting ATP synthase activity, rotational mechanism"/>
    <property type="evidence" value="ECO:0007669"/>
    <property type="project" value="UniProtKB-UniRule"/>
</dbReference>
<dbReference type="CDD" id="cd06503">
    <property type="entry name" value="ATP-synt_Fo_b"/>
    <property type="match status" value="1"/>
</dbReference>
<dbReference type="Gene3D" id="6.10.250.1580">
    <property type="match status" value="1"/>
</dbReference>
<dbReference type="HAMAP" id="MF_01398">
    <property type="entry name" value="ATP_synth_b_bprime"/>
    <property type="match status" value="1"/>
</dbReference>
<dbReference type="InterPro" id="IPR028987">
    <property type="entry name" value="ATP_synth_B-like_membr_sf"/>
</dbReference>
<dbReference type="InterPro" id="IPR002146">
    <property type="entry name" value="ATP_synth_b/b'su_bac/chlpt"/>
</dbReference>
<dbReference type="InterPro" id="IPR005864">
    <property type="entry name" value="ATP_synth_F0_bsu_bac"/>
</dbReference>
<dbReference type="InterPro" id="IPR050059">
    <property type="entry name" value="ATP_synthase_B_chain"/>
</dbReference>
<dbReference type="NCBIfam" id="TIGR01144">
    <property type="entry name" value="ATP_synt_b"/>
    <property type="match status" value="1"/>
</dbReference>
<dbReference type="PANTHER" id="PTHR33445:SF1">
    <property type="entry name" value="ATP SYNTHASE SUBUNIT B"/>
    <property type="match status" value="1"/>
</dbReference>
<dbReference type="PANTHER" id="PTHR33445">
    <property type="entry name" value="ATP SYNTHASE SUBUNIT B', CHLOROPLASTIC"/>
    <property type="match status" value="1"/>
</dbReference>
<dbReference type="Pfam" id="PF00430">
    <property type="entry name" value="ATP-synt_B"/>
    <property type="match status" value="1"/>
</dbReference>
<dbReference type="SUPFAM" id="SSF81573">
    <property type="entry name" value="F1F0 ATP synthase subunit B, membrane domain"/>
    <property type="match status" value="1"/>
</dbReference>
<organism>
    <name type="scientific">Streptococcus pneumoniae (strain ATCC BAA-255 / R6)</name>
    <dbReference type="NCBI Taxonomy" id="171101"/>
    <lineage>
        <taxon>Bacteria</taxon>
        <taxon>Bacillati</taxon>
        <taxon>Bacillota</taxon>
        <taxon>Bacilli</taxon>
        <taxon>Lactobacillales</taxon>
        <taxon>Streptococcaceae</taxon>
        <taxon>Streptococcus</taxon>
    </lineage>
</organism>
<sequence length="164" mass="17987">MHVTVGELIGNFILITGSFILLLVLIKKFAWSNITGIFEERAEKIASDIDRAEEARQKAEVLAQKREDELAGSRKEAKTIIENAKETAEQSKANILADAKLEAGHLKEKANQEIAQNKVEALQSVKGEVADLTISLAGKIISQNLDSHAHKALIDQYIDQLGEA</sequence>
<accession>P0A2Z3</accession>
<accession>Q59952</accession>
<accession>Q59955</accession>
<feature type="chain" id="PRO_0000082390" description="ATP synthase subunit b">
    <location>
        <begin position="1"/>
        <end position="164"/>
    </location>
</feature>
<feature type="transmembrane region" description="Helical" evidence="1">
    <location>
        <begin position="6"/>
        <end position="26"/>
    </location>
</feature>
<gene>
    <name evidence="1" type="primary">atpF</name>
    <name type="synonym">atpB</name>
    <name type="ordered locus">spr1364</name>
</gene>
<comment type="function">
    <text evidence="1">F(1)F(0) ATP synthase produces ATP from ADP in the presence of a proton or sodium gradient. F-type ATPases consist of two structural domains, F(1) containing the extramembraneous catalytic core and F(0) containing the membrane proton channel, linked together by a central stalk and a peripheral stalk. During catalysis, ATP synthesis in the catalytic domain of F(1) is coupled via a rotary mechanism of the central stalk subunits to proton translocation.</text>
</comment>
<comment type="function">
    <text evidence="1">Component of the F(0) channel, it forms part of the peripheral stalk, linking F(1) to F(0).</text>
</comment>
<comment type="subunit">
    <text evidence="1 2">F-type ATPases have 2 components, F(1) - the catalytic core - and F(0) - the membrane proton channel. F(1) has five subunits: alpha(3), beta(3), gamma(1), delta(1), epsilon(1). F(0) has three main subunits: a(1), b(2) and c(10-14). The alpha and beta chains form an alternating ring which encloses part of the gamma chain. F(1) is attached to F(0) by a central stalk formed by the gamma and epsilon chains, while a peripheral stalk is formed by the delta and b chains.</text>
</comment>
<comment type="subcellular location">
    <subcellularLocation>
        <location evidence="3">Cell membrane</location>
        <topology evidence="3">Single-pass membrane protein</topology>
    </subcellularLocation>
</comment>
<comment type="induction">
    <text evidence="2">Induced by a decrease in external pH from 7.5 to 5.7.</text>
</comment>
<comment type="similarity">
    <text evidence="1">Belongs to the ATPase B chain family.</text>
</comment>
<keyword id="KW-0066">ATP synthesis</keyword>
<keyword id="KW-1003">Cell membrane</keyword>
<keyword id="KW-0138">CF(0)</keyword>
<keyword id="KW-0375">Hydrogen ion transport</keyword>
<keyword id="KW-0406">Ion transport</keyword>
<keyword id="KW-0472">Membrane</keyword>
<keyword id="KW-1185">Reference proteome</keyword>
<keyword id="KW-0812">Transmembrane</keyword>
<keyword id="KW-1133">Transmembrane helix</keyword>
<keyword id="KW-0813">Transport</keyword>
<name>ATPF_STRR6</name>
<protein>
    <recommendedName>
        <fullName evidence="1">ATP synthase subunit b</fullName>
    </recommendedName>
    <alternativeName>
        <fullName evidence="1">ATP synthase F(0) sector subunit b</fullName>
    </alternativeName>
    <alternativeName>
        <fullName evidence="1">ATPase subunit I</fullName>
    </alternativeName>
    <alternativeName>
        <fullName evidence="1">F-type ATPase subunit b</fullName>
        <shortName evidence="1">F-ATPase subunit b</shortName>
    </alternativeName>
</protein>